<dbReference type="EMBL" id="CP000571">
    <property type="protein sequence ID" value="ABN85883.1"/>
    <property type="molecule type" value="Genomic_DNA"/>
</dbReference>
<dbReference type="RefSeq" id="WP_004188590.1">
    <property type="nucleotide sequence ID" value="NC_009075.1"/>
</dbReference>
<dbReference type="SMR" id="A3NLD2"/>
<dbReference type="GeneID" id="93063709"/>
<dbReference type="KEGG" id="bpd:BURPS668_A2159"/>
<dbReference type="HOGENOM" id="CLU_893331_0_0_4"/>
<dbReference type="GO" id="GO:0005576">
    <property type="term" value="C:extracellular region"/>
    <property type="evidence" value="ECO:0007669"/>
    <property type="project" value="UniProtKB-SubCell"/>
</dbReference>
<dbReference type="Gene3D" id="1.20.1710.10">
    <property type="entry name" value="IpaD-like"/>
    <property type="match status" value="1"/>
</dbReference>
<dbReference type="InterPro" id="IPR036708">
    <property type="entry name" value="BipD-like_sf"/>
</dbReference>
<dbReference type="InterPro" id="IPR009483">
    <property type="entry name" value="IpaD/BipD/SipD"/>
</dbReference>
<dbReference type="NCBIfam" id="TIGR02553">
    <property type="entry name" value="SipD_IpaD_SspD"/>
    <property type="match status" value="1"/>
</dbReference>
<dbReference type="Pfam" id="PF06511">
    <property type="entry name" value="T3SS_TC"/>
    <property type="match status" value="1"/>
</dbReference>
<dbReference type="SUPFAM" id="SSF140693">
    <property type="entry name" value="IpaD-like"/>
    <property type="match status" value="1"/>
</dbReference>
<protein>
    <recommendedName>
        <fullName>Translocator protein BipD</fullName>
    </recommendedName>
</protein>
<comment type="function">
    <text evidence="1">Required for invasion of epithelial cells, as well as for survival within host cells, escape from endocytic vesicles and subsequent actin-tail formation. Probably regulates the secretion of effectors BipB and BipC and their final integration into the target cell membrane (By similarity).</text>
</comment>
<comment type="subcellular location">
    <subcellularLocation>
        <location evidence="1">Secreted</location>
    </subcellularLocation>
    <text evidence="1">Secreted via the bsa type III secretion system. Localizes to the tip of the external secretion needle that is part of the secretion apparatus (By similarity).</text>
</comment>
<comment type="domain">
    <text evidence="1">The N-terminal domain is an intra-molecular chaperone that prevents premature oligomerization of the residues on the coiled-coil region that are involved in interactions with the needle and/or itself. The residues in the C-terminal domain probably form oligomeric structures at the tip of the needle that are responsible for the regulation of secretion of other effectors (By similarity).</text>
</comment>
<comment type="similarity">
    <text evidence="3">Belongs to the invasin protein D family.</text>
</comment>
<accession>A3NLD2</accession>
<keyword id="KW-0175">Coiled coil</keyword>
<keyword id="KW-0964">Secreted</keyword>
<keyword id="KW-0843">Virulence</keyword>
<feature type="chain" id="PRO_0000344008" description="Translocator protein BipD">
    <location>
        <begin position="1"/>
        <end position="310"/>
    </location>
</feature>
<feature type="coiled-coil region" evidence="2">
    <location>
        <begin position="127"/>
        <end position="171"/>
    </location>
</feature>
<feature type="coiled-coil region" evidence="2">
    <location>
        <begin position="250"/>
        <end position="299"/>
    </location>
</feature>
<proteinExistence type="inferred from homology"/>
<name>BIPD_BURP6</name>
<evidence type="ECO:0000250" key="1"/>
<evidence type="ECO:0000255" key="2"/>
<evidence type="ECO:0000305" key="3"/>
<sequence>MNMHVDMGRALTVRDWPALEALAKTMPADAGARAMTDDDLRAAGVDRRVPEQKLGAAIDEFASLRLPDRIDGRFVDGRRANLTVFDDARVAVRGHARAQRNLLERLETELLGGTLDTAGDEGGIQPDPILQGLVDVIGQGKSDIDAYATIVEGLTKYFQSVADVMSKLQDYISAKDDKNMKIDGGKIKALIQQVIDHLPTMQLPKGADIARWRKELGDAVSISDSGVVTINPDKLIKMRDSLPPDGTVWDTARYQAWNTAFSGQKDNIQNDVQTLVEKYSHQNSNFDNLVKVLSGAISTLTDTAKSYLQI</sequence>
<organism>
    <name type="scientific">Burkholderia pseudomallei (strain 668)</name>
    <dbReference type="NCBI Taxonomy" id="320373"/>
    <lineage>
        <taxon>Bacteria</taxon>
        <taxon>Pseudomonadati</taxon>
        <taxon>Pseudomonadota</taxon>
        <taxon>Betaproteobacteria</taxon>
        <taxon>Burkholderiales</taxon>
        <taxon>Burkholderiaceae</taxon>
        <taxon>Burkholderia</taxon>
        <taxon>pseudomallei group</taxon>
    </lineage>
</organism>
<gene>
    <name type="primary">bipD</name>
    <name type="ordered locus">BURPS668_A2159</name>
</gene>
<reference key="1">
    <citation type="journal article" date="2010" name="Genome Biol. Evol.">
        <title>Continuing evolution of Burkholderia mallei through genome reduction and large-scale rearrangements.</title>
        <authorList>
            <person name="Losada L."/>
            <person name="Ronning C.M."/>
            <person name="DeShazer D."/>
            <person name="Woods D."/>
            <person name="Fedorova N."/>
            <person name="Kim H.S."/>
            <person name="Shabalina S.A."/>
            <person name="Pearson T.R."/>
            <person name="Brinkac L."/>
            <person name="Tan P."/>
            <person name="Nandi T."/>
            <person name="Crabtree J."/>
            <person name="Badger J."/>
            <person name="Beckstrom-Sternberg S."/>
            <person name="Saqib M."/>
            <person name="Schutzer S.E."/>
            <person name="Keim P."/>
            <person name="Nierman W.C."/>
        </authorList>
    </citation>
    <scope>NUCLEOTIDE SEQUENCE [LARGE SCALE GENOMIC DNA]</scope>
    <source>
        <strain>668</strain>
    </source>
</reference>